<proteinExistence type="evidence at transcript level"/>
<sequence>MASFSIRAARPEDCSDLLRLIKELAKYEDMEDQVVLTEKELLEDGFGEHPFYHCLVAEVPKEQWSSEGHSIVGFAMYYFTYDPWIGKLLYLEDFYVMAEYRGLGIGSEILKNLSQVAVKCRCSSMHFLVAEWNEPSIRFYKRRGASDLSTEEGWRLFKIDKEYLLKMATEE</sequence>
<feature type="chain" id="PRO_0000074596" description="Diamine acetyltransferase 1">
    <location>
        <begin position="1"/>
        <end position="171"/>
    </location>
</feature>
<feature type="domain" description="N-acetyltransferase" evidence="3">
    <location>
        <begin position="4"/>
        <end position="171"/>
    </location>
</feature>
<feature type="active site" description="Proton donor" evidence="1">
    <location>
        <position position="140"/>
    </location>
</feature>
<feature type="binding site" evidence="2">
    <location>
        <begin position="27"/>
        <end position="28"/>
    </location>
    <ligand>
        <name>substrate</name>
    </ligand>
</feature>
<feature type="binding site" evidence="2">
    <location>
        <position position="92"/>
    </location>
    <ligand>
        <name>substrate</name>
    </ligand>
</feature>
<feature type="binding site" evidence="2">
    <location>
        <begin position="94"/>
        <end position="96"/>
    </location>
    <ligand>
        <name>acetyl-CoA</name>
        <dbReference type="ChEBI" id="CHEBI:57288"/>
    </ligand>
</feature>
<feature type="binding site" evidence="2">
    <location>
        <begin position="102"/>
        <end position="107"/>
    </location>
    <ligand>
        <name>acetyl-CoA</name>
        <dbReference type="ChEBI" id="CHEBI:57288"/>
    </ligand>
</feature>
<feature type="binding site" evidence="2">
    <location>
        <begin position="126"/>
        <end position="128"/>
    </location>
    <ligand>
        <name>substrate</name>
    </ligand>
</feature>
<feature type="binding site" evidence="2">
    <location>
        <begin position="133"/>
        <end position="136"/>
    </location>
    <ligand>
        <name>acetyl-CoA</name>
        <dbReference type="ChEBI" id="CHEBI:57288"/>
    </ligand>
</feature>
<feature type="binding site" evidence="2">
    <location>
        <begin position="140"/>
        <end position="143"/>
    </location>
    <ligand>
        <name>acetyl-CoA</name>
        <dbReference type="ChEBI" id="CHEBI:57288"/>
    </ligand>
</feature>
<feature type="binding site" evidence="2">
    <location>
        <position position="152"/>
    </location>
    <ligand>
        <name>substrate</name>
    </ligand>
</feature>
<name>SAT1_CHICK</name>
<reference key="1">
    <citation type="journal article" date="2002" name="Exp. Eye Res.">
        <title>Expression of spermidine/spermine N(1)-acetyltransferase in the Muller glial cells of the developing chick retina.</title>
        <authorList>
            <person name="Witte R.L."/>
            <person name="Godbout R."/>
        </authorList>
    </citation>
    <scope>NUCLEOTIDE SEQUENCE [MRNA]</scope>
    <scope>DEVELOPMENTAL STAGE</scope>
    <source>
        <tissue>Retina</tissue>
    </source>
</reference>
<gene>
    <name type="primary">SAT1</name>
    <name type="synonym">SAT</name>
    <name type="synonym">SSAT</name>
</gene>
<protein>
    <recommendedName>
        <fullName>Diamine acetyltransferase 1</fullName>
        <ecNumber evidence="2">2.3.1.57</ecNumber>
    </recommendedName>
    <alternativeName>
        <fullName>Polyamine N-acetyltransferase 1</fullName>
    </alternativeName>
    <alternativeName>
        <fullName>Putrescine acetyltransferase</fullName>
    </alternativeName>
    <alternativeName>
        <fullName evidence="5">Spermidine/spermine N(1)-acetyltransferase 1</fullName>
        <shortName evidence="5">SSAT</shortName>
        <shortName>SSAT-1</shortName>
    </alternativeName>
</protein>
<organism>
    <name type="scientific">Gallus gallus</name>
    <name type="common">Chicken</name>
    <dbReference type="NCBI Taxonomy" id="9031"/>
    <lineage>
        <taxon>Eukaryota</taxon>
        <taxon>Metazoa</taxon>
        <taxon>Chordata</taxon>
        <taxon>Craniata</taxon>
        <taxon>Vertebrata</taxon>
        <taxon>Euteleostomi</taxon>
        <taxon>Archelosauria</taxon>
        <taxon>Archosauria</taxon>
        <taxon>Dinosauria</taxon>
        <taxon>Saurischia</taxon>
        <taxon>Theropoda</taxon>
        <taxon>Coelurosauria</taxon>
        <taxon>Aves</taxon>
        <taxon>Neognathae</taxon>
        <taxon>Galloanserae</taxon>
        <taxon>Galliformes</taxon>
        <taxon>Phasianidae</taxon>
        <taxon>Phasianinae</taxon>
        <taxon>Gallus</taxon>
    </lineage>
</organism>
<evidence type="ECO:0000250" key="1">
    <source>
        <dbReference type="UniProtKB" id="P0A951"/>
    </source>
</evidence>
<evidence type="ECO:0000250" key="2">
    <source>
        <dbReference type="UniProtKB" id="P21673"/>
    </source>
</evidence>
<evidence type="ECO:0000255" key="3">
    <source>
        <dbReference type="PROSITE-ProRule" id="PRU00532"/>
    </source>
</evidence>
<evidence type="ECO:0000269" key="4">
    <source>
    </source>
</evidence>
<evidence type="ECO:0000303" key="5">
    <source>
    </source>
</evidence>
<evidence type="ECO:0000305" key="6"/>
<dbReference type="EC" id="2.3.1.57" evidence="2"/>
<dbReference type="EMBL" id="AF402003">
    <property type="protein sequence ID" value="AAN76653.1"/>
    <property type="molecule type" value="mRNA"/>
</dbReference>
<dbReference type="RefSeq" id="NP_989517.1">
    <property type="nucleotide sequence ID" value="NM_204186.2"/>
</dbReference>
<dbReference type="SMR" id="Q8AXL1"/>
<dbReference type="FunCoup" id="Q8AXL1">
    <property type="interactions" value="483"/>
</dbReference>
<dbReference type="STRING" id="9031.ENSGALP00000035846"/>
<dbReference type="PaxDb" id="9031-ENSGALP00000035846"/>
<dbReference type="Ensembl" id="ENSGALT00010007306.1">
    <property type="protein sequence ID" value="ENSGALP00010004384.1"/>
    <property type="gene ID" value="ENSGALG00010003133.1"/>
</dbReference>
<dbReference type="GeneID" id="374006"/>
<dbReference type="KEGG" id="gga:374006"/>
<dbReference type="CTD" id="6303"/>
<dbReference type="VEuPathDB" id="HostDB:geneid_374006"/>
<dbReference type="eggNOG" id="KOG3216">
    <property type="taxonomic scope" value="Eukaryota"/>
</dbReference>
<dbReference type="GeneTree" id="ENSGT00950000183121"/>
<dbReference type="HOGENOM" id="CLU_013985_41_1_1"/>
<dbReference type="InParanoid" id="Q8AXL1"/>
<dbReference type="OMA" id="IAVKCRC"/>
<dbReference type="OrthoDB" id="7305308at2759"/>
<dbReference type="PhylomeDB" id="Q8AXL1"/>
<dbReference type="Reactome" id="R-GGA-351200">
    <property type="pathway name" value="Interconversion of polyamines"/>
</dbReference>
<dbReference type="UniPathway" id="UPA00188">
    <property type="reaction ID" value="UER00363"/>
</dbReference>
<dbReference type="PRO" id="PR:Q8AXL1"/>
<dbReference type="Proteomes" id="UP000000539">
    <property type="component" value="Chromosome 1"/>
</dbReference>
<dbReference type="Bgee" id="ENSGALG00000016348">
    <property type="expression patterns" value="Expressed in ovary and 14 other cell types or tissues"/>
</dbReference>
<dbReference type="GO" id="GO:0005737">
    <property type="term" value="C:cytoplasm"/>
    <property type="evidence" value="ECO:0007669"/>
    <property type="project" value="UniProtKB-SubCell"/>
</dbReference>
<dbReference type="GO" id="GO:0004145">
    <property type="term" value="F:diamine N-acetyltransferase activity"/>
    <property type="evidence" value="ECO:0000250"/>
    <property type="project" value="UniProtKB"/>
</dbReference>
<dbReference type="GO" id="GO:0042802">
    <property type="term" value="F:identical protein binding"/>
    <property type="evidence" value="ECO:0007669"/>
    <property type="project" value="Ensembl"/>
</dbReference>
<dbReference type="GO" id="GO:0008080">
    <property type="term" value="F:N-acetyltransferase activity"/>
    <property type="evidence" value="ECO:0000250"/>
    <property type="project" value="UniProtKB"/>
</dbReference>
<dbReference type="GO" id="GO:0019809">
    <property type="term" value="F:spermidine binding"/>
    <property type="evidence" value="ECO:0000318"/>
    <property type="project" value="GO_Central"/>
</dbReference>
<dbReference type="GO" id="GO:0001525">
    <property type="term" value="P:angiogenesis"/>
    <property type="evidence" value="ECO:0007669"/>
    <property type="project" value="Ensembl"/>
</dbReference>
<dbReference type="GO" id="GO:0006596">
    <property type="term" value="P:polyamine biosynthetic process"/>
    <property type="evidence" value="ECO:0000250"/>
    <property type="project" value="UniProtKB"/>
</dbReference>
<dbReference type="GO" id="GO:0009447">
    <property type="term" value="P:putrescine catabolic process"/>
    <property type="evidence" value="ECO:0007669"/>
    <property type="project" value="UniProtKB-UniPathway"/>
</dbReference>
<dbReference type="GO" id="GO:0042127">
    <property type="term" value="P:regulation of cell population proliferation"/>
    <property type="evidence" value="ECO:0007669"/>
    <property type="project" value="Ensembl"/>
</dbReference>
<dbReference type="GO" id="GO:0032918">
    <property type="term" value="P:spermidine acetylation"/>
    <property type="evidence" value="ECO:0000250"/>
    <property type="project" value="UniProtKB"/>
</dbReference>
<dbReference type="CDD" id="cd04301">
    <property type="entry name" value="NAT_SF"/>
    <property type="match status" value="1"/>
</dbReference>
<dbReference type="FunFam" id="3.40.630.30:FF:000011">
    <property type="entry name" value="Diamine acetyltransferase 1"/>
    <property type="match status" value="1"/>
</dbReference>
<dbReference type="Gene3D" id="3.40.630.30">
    <property type="match status" value="1"/>
</dbReference>
<dbReference type="InterPro" id="IPR016181">
    <property type="entry name" value="Acyl_CoA_acyltransferase"/>
</dbReference>
<dbReference type="InterPro" id="IPR051016">
    <property type="entry name" value="Diverse_Substrate_AcTransf"/>
</dbReference>
<dbReference type="InterPro" id="IPR000182">
    <property type="entry name" value="GNAT_dom"/>
</dbReference>
<dbReference type="PANTHER" id="PTHR10545:SF36">
    <property type="entry name" value="DIAMINE ACETYLTRANSFERASE 1"/>
    <property type="match status" value="1"/>
</dbReference>
<dbReference type="PANTHER" id="PTHR10545">
    <property type="entry name" value="DIAMINE N-ACETYLTRANSFERASE"/>
    <property type="match status" value="1"/>
</dbReference>
<dbReference type="Pfam" id="PF00583">
    <property type="entry name" value="Acetyltransf_1"/>
    <property type="match status" value="1"/>
</dbReference>
<dbReference type="SUPFAM" id="SSF55729">
    <property type="entry name" value="Acyl-CoA N-acyltransferases (Nat)"/>
    <property type="match status" value="1"/>
</dbReference>
<dbReference type="PROSITE" id="PS51186">
    <property type="entry name" value="GNAT"/>
    <property type="match status" value="1"/>
</dbReference>
<keyword id="KW-0012">Acyltransferase</keyword>
<keyword id="KW-0963">Cytoplasm</keyword>
<keyword id="KW-1185">Reference proteome</keyword>
<keyword id="KW-0808">Transferase</keyword>
<accession>Q8AXL1</accession>
<comment type="function">
    <text evidence="2">Enzyme which catalyzes the acetylation of polyamines. Substrate specificity: norspermidine = spermidine &gt;&gt; spermine &gt; N(1)-acetylspermine. This highly regulated enzyme allows a fine attenuation of the intracellular concentration of polyamines. Also involved in the regulation of polyamine transport out of cells.</text>
</comment>
<comment type="catalytic activity">
    <reaction evidence="2">
        <text>an alkane-alpha,omega-diamine + acetyl-CoA = an N-acetylalkane-alpha,omega-diamine + CoA + H(+)</text>
        <dbReference type="Rhea" id="RHEA:11116"/>
        <dbReference type="Rhea" id="RHEA-COMP:9766"/>
        <dbReference type="Rhea" id="RHEA-COMP:9767"/>
        <dbReference type="ChEBI" id="CHEBI:15378"/>
        <dbReference type="ChEBI" id="CHEBI:57287"/>
        <dbReference type="ChEBI" id="CHEBI:57288"/>
        <dbReference type="ChEBI" id="CHEBI:70977"/>
        <dbReference type="ChEBI" id="CHEBI:70988"/>
        <dbReference type="EC" id="2.3.1.57"/>
    </reaction>
    <physiologicalReaction direction="left-to-right" evidence="2">
        <dbReference type="Rhea" id="RHEA:11117"/>
    </physiologicalReaction>
</comment>
<comment type="catalytic activity">
    <reaction evidence="2">
        <text>spermidine + acetyl-CoA = N(1)-acetylspermidine + CoA + H(+)</text>
        <dbReference type="Rhea" id="RHEA:28150"/>
        <dbReference type="ChEBI" id="CHEBI:15378"/>
        <dbReference type="ChEBI" id="CHEBI:57287"/>
        <dbReference type="ChEBI" id="CHEBI:57288"/>
        <dbReference type="ChEBI" id="CHEBI:57834"/>
        <dbReference type="ChEBI" id="CHEBI:58324"/>
        <dbReference type="EC" id="2.3.1.57"/>
    </reaction>
    <physiologicalReaction direction="left-to-right" evidence="2">
        <dbReference type="Rhea" id="RHEA:28151"/>
    </physiologicalReaction>
</comment>
<comment type="catalytic activity">
    <reaction evidence="2">
        <text>spermine + acetyl-CoA = N(1)-acetylspermine + CoA + H(+)</text>
        <dbReference type="Rhea" id="RHEA:33099"/>
        <dbReference type="ChEBI" id="CHEBI:15378"/>
        <dbReference type="ChEBI" id="CHEBI:45725"/>
        <dbReference type="ChEBI" id="CHEBI:57287"/>
        <dbReference type="ChEBI" id="CHEBI:57288"/>
        <dbReference type="ChEBI" id="CHEBI:58101"/>
        <dbReference type="EC" id="2.3.1.57"/>
    </reaction>
    <physiologicalReaction direction="left-to-right" evidence="2">
        <dbReference type="Rhea" id="RHEA:33100"/>
    </physiologicalReaction>
</comment>
<comment type="pathway">
    <text evidence="2">Amine and polyamine degradation; putrescine degradation; N-acetylputrescine from putrescine: step 1/1.</text>
</comment>
<comment type="subunit">
    <text evidence="2">Homodimer.</text>
</comment>
<comment type="subcellular location">
    <subcellularLocation>
        <location evidence="2">Cytoplasm</location>
    </subcellularLocation>
</comment>
<comment type="developmental stage">
    <text evidence="4">Preferentially expressed in the dorsal-temporal quadrant of the developing retina. There was a sharp increase in retinal SSAT levels during the transition stage from proliferation (7 dpc) to early differentiation (10 dpc). SSAT was found in Muller glial cells and its distribution pattern in these cells closely followed the three differentiation axis of the developing retina, with a central-dorsal-temporal preference.</text>
</comment>
<comment type="similarity">
    <text evidence="6">Belongs to the acetyltransferase family.</text>
</comment>